<name>EIF3G_CULQU</name>
<protein>
    <recommendedName>
        <fullName evidence="1">Eukaryotic translation initiation factor 3 subunit G</fullName>
        <shortName evidence="1">eIF3g</shortName>
    </recommendedName>
    <alternativeName>
        <fullName evidence="1">Eukaryotic translation initiation factor 3 RNA-binding subunit</fullName>
        <shortName evidence="1">eIF-3 RNA-binding subunit</shortName>
    </alternativeName>
    <alternativeName>
        <fullName evidence="1">Eukaryotic translation initiation factor 3 subunit 4</fullName>
    </alternativeName>
</protein>
<dbReference type="EMBL" id="DS231815">
    <property type="protein sequence ID" value="EDS35163.1"/>
    <property type="molecule type" value="Genomic_DNA"/>
</dbReference>
<dbReference type="SMR" id="B0VZS1"/>
<dbReference type="FunCoup" id="B0VZS1">
    <property type="interactions" value="1690"/>
</dbReference>
<dbReference type="STRING" id="7176.B0VZS1"/>
<dbReference type="EnsemblMetazoa" id="CPIJ000190-RA">
    <property type="protein sequence ID" value="CPIJ000190-PA"/>
    <property type="gene ID" value="CPIJ000190"/>
</dbReference>
<dbReference type="EnsemblMetazoa" id="CQUJHB009918.R15317">
    <property type="protein sequence ID" value="CQUJHB009918.P15317"/>
    <property type="gene ID" value="CQUJHB009918"/>
</dbReference>
<dbReference type="EnsemblMetazoa" id="XM_001841903.2">
    <property type="protein sequence ID" value="XP_001841955.1"/>
    <property type="gene ID" value="LOC6031110"/>
</dbReference>
<dbReference type="GeneID" id="6031110"/>
<dbReference type="KEGG" id="cqu:CpipJ_CPIJ000190"/>
<dbReference type="VEuPathDB" id="VectorBase:CPIJ000190"/>
<dbReference type="VEuPathDB" id="VectorBase:CQUJHB009918"/>
<dbReference type="eggNOG" id="KOG0122">
    <property type="taxonomic scope" value="Eukaryota"/>
</dbReference>
<dbReference type="HOGENOM" id="CLU_034595_0_0_1"/>
<dbReference type="InParanoid" id="B0VZS1"/>
<dbReference type="OMA" id="ICQGDHF"/>
<dbReference type="OrthoDB" id="639027at2759"/>
<dbReference type="PhylomeDB" id="B0VZS1"/>
<dbReference type="Proteomes" id="UP000002320">
    <property type="component" value="Unassembled WGS sequence"/>
</dbReference>
<dbReference type="GO" id="GO:0016282">
    <property type="term" value="C:eukaryotic 43S preinitiation complex"/>
    <property type="evidence" value="ECO:0007669"/>
    <property type="project" value="UniProtKB-UniRule"/>
</dbReference>
<dbReference type="GO" id="GO:0033290">
    <property type="term" value="C:eukaryotic 48S preinitiation complex"/>
    <property type="evidence" value="ECO:0007669"/>
    <property type="project" value="UniProtKB-UniRule"/>
</dbReference>
<dbReference type="GO" id="GO:0005852">
    <property type="term" value="C:eukaryotic translation initiation factor 3 complex"/>
    <property type="evidence" value="ECO:0007669"/>
    <property type="project" value="UniProtKB-UniRule"/>
</dbReference>
<dbReference type="GO" id="GO:0003723">
    <property type="term" value="F:RNA binding"/>
    <property type="evidence" value="ECO:0007669"/>
    <property type="project" value="UniProtKB-UniRule"/>
</dbReference>
<dbReference type="GO" id="GO:0003743">
    <property type="term" value="F:translation initiation factor activity"/>
    <property type="evidence" value="ECO:0007669"/>
    <property type="project" value="UniProtKB-UniRule"/>
</dbReference>
<dbReference type="GO" id="GO:0001732">
    <property type="term" value="P:formation of cytoplasmic translation initiation complex"/>
    <property type="evidence" value="ECO:0007669"/>
    <property type="project" value="UniProtKB-UniRule"/>
</dbReference>
<dbReference type="CDD" id="cd12933">
    <property type="entry name" value="eIF3G"/>
    <property type="match status" value="1"/>
</dbReference>
<dbReference type="CDD" id="cd12408">
    <property type="entry name" value="RRM_eIF3G_like"/>
    <property type="match status" value="1"/>
</dbReference>
<dbReference type="FunFam" id="3.30.70.330:FF:000828">
    <property type="entry name" value="Eukaryotic translation initiation factor 3 subunit G"/>
    <property type="match status" value="1"/>
</dbReference>
<dbReference type="Gene3D" id="3.30.70.330">
    <property type="match status" value="1"/>
</dbReference>
<dbReference type="HAMAP" id="MF_03006">
    <property type="entry name" value="eIF3g"/>
    <property type="match status" value="1"/>
</dbReference>
<dbReference type="InterPro" id="IPR017334">
    <property type="entry name" value="eIF3_g"/>
</dbReference>
<dbReference type="InterPro" id="IPR024675">
    <property type="entry name" value="eIF3g_N"/>
</dbReference>
<dbReference type="InterPro" id="IPR034240">
    <property type="entry name" value="eIF3G_RRM"/>
</dbReference>
<dbReference type="InterPro" id="IPR012677">
    <property type="entry name" value="Nucleotide-bd_a/b_plait_sf"/>
</dbReference>
<dbReference type="InterPro" id="IPR035979">
    <property type="entry name" value="RBD_domain_sf"/>
</dbReference>
<dbReference type="InterPro" id="IPR000504">
    <property type="entry name" value="RRM_dom"/>
</dbReference>
<dbReference type="PANTHER" id="PTHR10352">
    <property type="entry name" value="EUKARYOTIC TRANSLATION INITIATION FACTOR 3 SUBUNIT G"/>
    <property type="match status" value="1"/>
</dbReference>
<dbReference type="Pfam" id="PF12353">
    <property type="entry name" value="eIF3g"/>
    <property type="match status" value="1"/>
</dbReference>
<dbReference type="Pfam" id="PF00076">
    <property type="entry name" value="RRM_1"/>
    <property type="match status" value="1"/>
</dbReference>
<dbReference type="PIRSF" id="PIRSF037949">
    <property type="entry name" value="Transl_init_eIF-3_RNA-bind"/>
    <property type="match status" value="1"/>
</dbReference>
<dbReference type="SMART" id="SM00360">
    <property type="entry name" value="RRM"/>
    <property type="match status" value="1"/>
</dbReference>
<dbReference type="SUPFAM" id="SSF54928">
    <property type="entry name" value="RNA-binding domain, RBD"/>
    <property type="match status" value="1"/>
</dbReference>
<dbReference type="PROSITE" id="PS50102">
    <property type="entry name" value="RRM"/>
    <property type="match status" value="1"/>
</dbReference>
<evidence type="ECO:0000255" key="1">
    <source>
        <dbReference type="HAMAP-Rule" id="MF_03006"/>
    </source>
</evidence>
<evidence type="ECO:0000256" key="2">
    <source>
        <dbReference type="SAM" id="MobiDB-lite"/>
    </source>
</evidence>
<organism>
    <name type="scientific">Culex quinquefasciatus</name>
    <name type="common">Southern house mosquito</name>
    <name type="synonym">Culex pungens</name>
    <dbReference type="NCBI Taxonomy" id="7176"/>
    <lineage>
        <taxon>Eukaryota</taxon>
        <taxon>Metazoa</taxon>
        <taxon>Ecdysozoa</taxon>
        <taxon>Arthropoda</taxon>
        <taxon>Hexapoda</taxon>
        <taxon>Insecta</taxon>
        <taxon>Pterygota</taxon>
        <taxon>Neoptera</taxon>
        <taxon>Endopterygota</taxon>
        <taxon>Diptera</taxon>
        <taxon>Nematocera</taxon>
        <taxon>Culicoidea</taxon>
        <taxon>Culicidae</taxon>
        <taxon>Culicinae</taxon>
        <taxon>Culicini</taxon>
        <taxon>Culex</taxon>
        <taxon>Culex</taxon>
    </lineage>
</organism>
<feature type="chain" id="PRO_0000365406" description="Eukaryotic translation initiation factor 3 subunit G">
    <location>
        <begin position="1"/>
        <end position="272"/>
    </location>
</feature>
<feature type="domain" description="RRM" evidence="1">
    <location>
        <begin position="190"/>
        <end position="268"/>
    </location>
</feature>
<feature type="region of interest" description="Disordered" evidence="2">
    <location>
        <begin position="1"/>
        <end position="28"/>
    </location>
</feature>
<feature type="region of interest" description="Disordered" evidence="2">
    <location>
        <begin position="143"/>
        <end position="187"/>
    </location>
</feature>
<sequence length="272" mass="30169">MPALDEIKSSWADEVELDSGSLPPPTEIVENGQKVVTEYKYNKDDKKVKVVRTYKITRLVVPKSVAKRKNWAKFGDSAGDKPGPNPQTTFVSEDIYMQFVSNKEEEQKSDNALDSLKNIAKCRICEGEHWSVQCPYKGTSYEAGKAKPVPAAQPESSSAPIKSGKYVPPSMRDSQKAALGANPRGRDDTTAIRISNLSEAMTEADLEELVKKIGPHSKMFLARDKNTGLCKGFAYVHFKSRRDAATAIELLNGHGYDHLILNVEWSKPQNPQ</sequence>
<reference key="1">
    <citation type="submission" date="2007-03" db="EMBL/GenBank/DDBJ databases">
        <title>Annotation of Culex pipiens quinquefasciatus.</title>
        <authorList>
            <consortium name="The Broad Institute Genome Sequencing Platform"/>
            <person name="Atkinson P.W."/>
            <person name="Hemingway J."/>
            <person name="Christensen B.M."/>
            <person name="Higgs S."/>
            <person name="Kodira C.D."/>
            <person name="Hannick L.I."/>
            <person name="Megy K."/>
            <person name="O'Leary S.B."/>
            <person name="Pearson M."/>
            <person name="Haas B.J."/>
            <person name="Mauceli E."/>
            <person name="Wortman J.R."/>
            <person name="Lee N.H."/>
            <person name="Guigo R."/>
            <person name="Stanke M."/>
            <person name="Alvarado L."/>
            <person name="Amedeo P."/>
            <person name="Antoine C.H."/>
            <person name="Arensburger P."/>
            <person name="Bidwell S.L."/>
            <person name="Crawford M."/>
            <person name="Camaro F."/>
            <person name="Devon K."/>
            <person name="Engels R."/>
            <person name="Hammond M."/>
            <person name="Howarth C."/>
            <person name="Koehrsen M."/>
            <person name="Lawson D."/>
            <person name="Montgomery P."/>
            <person name="Nene V."/>
            <person name="Nusbaum C."/>
            <person name="Puiu D."/>
            <person name="Romero-Severson J."/>
            <person name="Severson D.W."/>
            <person name="Shumway M."/>
            <person name="Sisk P."/>
            <person name="Stolte C."/>
            <person name="Zeng Q."/>
            <person name="Eisenstadt E."/>
            <person name="Fraser-Liggett C.M."/>
            <person name="Strausberg R."/>
            <person name="Galagan J."/>
            <person name="Birren B."/>
            <person name="Collins F.H."/>
        </authorList>
    </citation>
    <scope>NUCLEOTIDE SEQUENCE [LARGE SCALE GENOMIC DNA]</scope>
    <source>
        <strain>JHB</strain>
    </source>
</reference>
<gene>
    <name evidence="1" type="primary">eIF3-S4</name>
    <name type="ORF">CPIJ000190</name>
</gene>
<accession>B0VZS1</accession>
<comment type="function">
    <text evidence="1">RNA-binding component of the eukaryotic translation initiation factor 3 (eIF-3) complex, which is involved in protein synthesis of a specialized repertoire of mRNAs and, together with other initiation factors, stimulates binding of mRNA and methionyl-tRNAi to the 40S ribosome. The eIF-3 complex specifically targets and initiates translation of a subset of mRNAs involved in cell proliferation. This subunit can bind 18S rRNA.</text>
</comment>
<comment type="subunit">
    <text evidence="1">Component of the eukaryotic translation initiation factor 3 (eIF-3) complex.</text>
</comment>
<comment type="subcellular location">
    <subcellularLocation>
        <location evidence="1">Cytoplasm</location>
    </subcellularLocation>
</comment>
<comment type="similarity">
    <text evidence="1">Belongs to the eIF-3 subunit G family.</text>
</comment>
<keyword id="KW-0963">Cytoplasm</keyword>
<keyword id="KW-0396">Initiation factor</keyword>
<keyword id="KW-0648">Protein biosynthesis</keyword>
<keyword id="KW-1185">Reference proteome</keyword>
<keyword id="KW-0694">RNA-binding</keyword>
<proteinExistence type="inferred from homology"/>